<name>TSN3_HUMAN</name>
<organism>
    <name type="scientific">Homo sapiens</name>
    <name type="common">Human</name>
    <dbReference type="NCBI Taxonomy" id="9606"/>
    <lineage>
        <taxon>Eukaryota</taxon>
        <taxon>Metazoa</taxon>
        <taxon>Chordata</taxon>
        <taxon>Craniata</taxon>
        <taxon>Vertebrata</taxon>
        <taxon>Euteleostomi</taxon>
        <taxon>Mammalia</taxon>
        <taxon>Eutheria</taxon>
        <taxon>Euarchontoglires</taxon>
        <taxon>Primates</taxon>
        <taxon>Haplorrhini</taxon>
        <taxon>Catarrhini</taxon>
        <taxon>Hominidae</taxon>
        <taxon>Homo</taxon>
    </lineage>
</organism>
<evidence type="ECO:0000250" key="1"/>
<evidence type="ECO:0000255" key="2"/>
<evidence type="ECO:0000303" key="3">
    <source>
    </source>
</evidence>
<evidence type="ECO:0000303" key="4">
    <source>
    </source>
</evidence>
<evidence type="ECO:0000305" key="5"/>
<comment type="function">
    <text evidence="1">Regulates the proliferation and migration of oligodendrocytes, a process essential for normal myelination and repair.</text>
</comment>
<comment type="subunit">
    <text evidence="1">Interacts with claudin-11/CLDN11 and integrins.</text>
</comment>
<comment type="subcellular location">
    <subcellularLocation>
        <location evidence="5">Membrane</location>
        <topology evidence="5">Multi-pass membrane protein</topology>
    </subcellularLocation>
</comment>
<comment type="alternative products">
    <event type="alternative splicing"/>
    <isoform>
        <id>O60637-1</id>
        <name>1</name>
        <sequence type="displayed"/>
    </isoform>
    <isoform>
        <id>O60637-2</id>
        <name>2</name>
        <sequence type="described" ref="VSP_042679"/>
    </isoform>
    <isoform>
        <id>O60637-3</id>
        <name>3</name>
        <sequence type="described" ref="VSP_043519"/>
    </isoform>
</comment>
<comment type="similarity">
    <text evidence="5">Belongs to the tetraspanin (TM4SF) family.</text>
</comment>
<protein>
    <recommendedName>
        <fullName>Tetraspanin-3</fullName>
        <shortName>Tspan-3</shortName>
    </recommendedName>
    <alternativeName>
        <fullName>Tetraspanin TM4-A</fullName>
    </alternativeName>
    <alternativeName>
        <fullName>Transmembrane 4 superfamily member 8</fullName>
    </alternativeName>
</protein>
<accession>O60637</accession>
<accession>A6NEH4</accession>
<accession>B3KQQ2</accession>
<accession>B4DP19</accession>
<accession>Q9BW22</accession>
<accession>Q9NVX9</accession>
<dbReference type="EMBL" id="AF054840">
    <property type="protein sequence ID" value="AAC69716.1"/>
    <property type="molecule type" value="mRNA"/>
</dbReference>
<dbReference type="EMBL" id="AF133423">
    <property type="protein sequence ID" value="AAF08362.1"/>
    <property type="molecule type" value="mRNA"/>
</dbReference>
<dbReference type="EMBL" id="AK001326">
    <property type="protein sequence ID" value="BAA91627.1"/>
    <property type="molecule type" value="mRNA"/>
</dbReference>
<dbReference type="EMBL" id="AK001305">
    <property type="protein sequence ID" value="BAA91613.1"/>
    <property type="molecule type" value="mRNA"/>
</dbReference>
<dbReference type="EMBL" id="AK001310">
    <property type="protein sequence ID" value="BAA91615.1"/>
    <property type="molecule type" value="mRNA"/>
</dbReference>
<dbReference type="EMBL" id="AK075336">
    <property type="protein sequence ID" value="BAG52114.1"/>
    <property type="molecule type" value="mRNA"/>
</dbReference>
<dbReference type="EMBL" id="AK075482">
    <property type="protein sequence ID" value="BAG52152.1"/>
    <property type="molecule type" value="mRNA"/>
</dbReference>
<dbReference type="EMBL" id="AK298157">
    <property type="protein sequence ID" value="BAG60431.1"/>
    <property type="molecule type" value="mRNA"/>
</dbReference>
<dbReference type="EMBL" id="AC090181">
    <property type="status" value="NOT_ANNOTATED_CDS"/>
    <property type="molecule type" value="Genomic_DNA"/>
</dbReference>
<dbReference type="EMBL" id="CH471136">
    <property type="protein sequence ID" value="EAW99209.1"/>
    <property type="molecule type" value="Genomic_DNA"/>
</dbReference>
<dbReference type="EMBL" id="CH471136">
    <property type="protein sequence ID" value="EAW99210.1"/>
    <property type="molecule type" value="Genomic_DNA"/>
</dbReference>
<dbReference type="EMBL" id="CH471136">
    <property type="protein sequence ID" value="EAW99211.1"/>
    <property type="molecule type" value="Genomic_DNA"/>
</dbReference>
<dbReference type="EMBL" id="BC000704">
    <property type="protein sequence ID" value="AAH00704.1"/>
    <property type="molecule type" value="mRNA"/>
</dbReference>
<dbReference type="EMBL" id="BC004280">
    <property type="protein sequence ID" value="AAH04280.1"/>
    <property type="molecule type" value="mRNA"/>
</dbReference>
<dbReference type="EMBL" id="BC009248">
    <property type="protein sequence ID" value="AAH09248.1"/>
    <property type="molecule type" value="mRNA"/>
</dbReference>
<dbReference type="EMBL" id="BC011206">
    <property type="protein sequence ID" value="AAH11206.1"/>
    <property type="molecule type" value="mRNA"/>
</dbReference>
<dbReference type="CCDS" id="CCDS10292.1">
    <molecule id="O60637-1"/>
</dbReference>
<dbReference type="CCDS" id="CCDS10293.1">
    <molecule id="O60637-2"/>
</dbReference>
<dbReference type="CCDS" id="CCDS53963.1">
    <molecule id="O60637-3"/>
</dbReference>
<dbReference type="PIR" id="A59264">
    <property type="entry name" value="A59264"/>
</dbReference>
<dbReference type="RefSeq" id="NP_001161884.1">
    <molecule id="O60637-3"/>
    <property type="nucleotide sequence ID" value="NM_001168412.2"/>
</dbReference>
<dbReference type="RefSeq" id="NP_005715.1">
    <molecule id="O60637-1"/>
    <property type="nucleotide sequence ID" value="NM_005724.6"/>
</dbReference>
<dbReference type="RefSeq" id="NP_944492.1">
    <molecule id="O60637-2"/>
    <property type="nucleotide sequence ID" value="NM_198902.3"/>
</dbReference>
<dbReference type="SMR" id="O60637"/>
<dbReference type="BioGRID" id="115406">
    <property type="interactions" value="104"/>
</dbReference>
<dbReference type="FunCoup" id="O60637">
    <property type="interactions" value="639"/>
</dbReference>
<dbReference type="IntAct" id="O60637">
    <property type="interactions" value="90"/>
</dbReference>
<dbReference type="MINT" id="O60637"/>
<dbReference type="STRING" id="9606.ENSP00000267970"/>
<dbReference type="TCDB" id="8.A.40.1.16">
    <property type="family name" value="the tetraspanin (tetraspanin) family"/>
</dbReference>
<dbReference type="GlyConnect" id="710">
    <property type="glycosylation" value="20 N-Linked glycans (2 sites)"/>
</dbReference>
<dbReference type="GlyCosmos" id="O60637">
    <property type="glycosylation" value="4 sites, 21 glycans"/>
</dbReference>
<dbReference type="GlyGen" id="O60637">
    <property type="glycosylation" value="7 sites, 64 N-linked glycans (4 sites), 1 O-linked glycan (1 site)"/>
</dbReference>
<dbReference type="iPTMnet" id="O60637"/>
<dbReference type="PhosphoSitePlus" id="O60637"/>
<dbReference type="SwissPalm" id="O60637"/>
<dbReference type="BioMuta" id="TSPAN3"/>
<dbReference type="jPOST" id="O60637"/>
<dbReference type="MassIVE" id="O60637"/>
<dbReference type="PaxDb" id="9606-ENSP00000267970"/>
<dbReference type="PeptideAtlas" id="O60637"/>
<dbReference type="ProteomicsDB" id="49490">
    <molecule id="O60637-1"/>
</dbReference>
<dbReference type="ProteomicsDB" id="49491">
    <molecule id="O60637-2"/>
</dbReference>
<dbReference type="ProteomicsDB" id="49492">
    <molecule id="O60637-3"/>
</dbReference>
<dbReference type="Pumba" id="O60637"/>
<dbReference type="Antibodypedia" id="3085">
    <property type="antibodies" value="158 antibodies from 20 providers"/>
</dbReference>
<dbReference type="DNASU" id="10099"/>
<dbReference type="Ensembl" id="ENST00000267970.9">
    <molecule id="O60637-1"/>
    <property type="protein sequence ID" value="ENSP00000267970.4"/>
    <property type="gene ID" value="ENSG00000140391.15"/>
</dbReference>
<dbReference type="Ensembl" id="ENST00000346495.6">
    <molecule id="O60637-2"/>
    <property type="protein sequence ID" value="ENSP00000341329.2"/>
    <property type="gene ID" value="ENSG00000140391.15"/>
</dbReference>
<dbReference type="Ensembl" id="ENST00000424443.7">
    <molecule id="O60637-3"/>
    <property type="protein sequence ID" value="ENSP00000407243.3"/>
    <property type="gene ID" value="ENSG00000140391.15"/>
</dbReference>
<dbReference type="GeneID" id="10099"/>
<dbReference type="KEGG" id="hsa:10099"/>
<dbReference type="MANE-Select" id="ENST00000267970.9">
    <property type="protein sequence ID" value="ENSP00000267970.4"/>
    <property type="RefSeq nucleotide sequence ID" value="NM_005724.6"/>
    <property type="RefSeq protein sequence ID" value="NP_005715.1"/>
</dbReference>
<dbReference type="UCSC" id="uc002bcj.4">
    <molecule id="O60637-1"/>
    <property type="organism name" value="human"/>
</dbReference>
<dbReference type="AGR" id="HGNC:17752"/>
<dbReference type="CTD" id="10099"/>
<dbReference type="DisGeNET" id="10099"/>
<dbReference type="GeneCards" id="TSPAN3"/>
<dbReference type="HGNC" id="HGNC:17752">
    <property type="gene designation" value="TSPAN3"/>
</dbReference>
<dbReference type="HPA" id="ENSG00000140391">
    <property type="expression patterns" value="Low tissue specificity"/>
</dbReference>
<dbReference type="MIM" id="613134">
    <property type="type" value="gene"/>
</dbReference>
<dbReference type="neXtProt" id="NX_O60637"/>
<dbReference type="OpenTargets" id="ENSG00000140391"/>
<dbReference type="PharmGKB" id="PA134913500"/>
<dbReference type="VEuPathDB" id="HostDB:ENSG00000140391"/>
<dbReference type="eggNOG" id="KOG3882">
    <property type="taxonomic scope" value="Eukaryota"/>
</dbReference>
<dbReference type="GeneTree" id="ENSGT00940000154954"/>
<dbReference type="HOGENOM" id="CLU_055524_5_2_1"/>
<dbReference type="InParanoid" id="O60637"/>
<dbReference type="OMA" id="ACKENKC"/>
<dbReference type="OrthoDB" id="9993879at2759"/>
<dbReference type="PAN-GO" id="O60637">
    <property type="GO annotations" value="1 GO annotation based on evolutionary models"/>
</dbReference>
<dbReference type="PhylomeDB" id="O60637"/>
<dbReference type="TreeFam" id="TF316345"/>
<dbReference type="PathwayCommons" id="O60637"/>
<dbReference type="SignaLink" id="O60637"/>
<dbReference type="BioGRID-ORCS" id="10099">
    <property type="hits" value="13 hits in 1168 CRISPR screens"/>
</dbReference>
<dbReference type="ChiTaRS" id="TSPAN3">
    <property type="organism name" value="human"/>
</dbReference>
<dbReference type="GeneWiki" id="TSPAN3"/>
<dbReference type="GenomeRNAi" id="10099"/>
<dbReference type="Pharos" id="O60637">
    <property type="development level" value="Tbio"/>
</dbReference>
<dbReference type="PRO" id="PR:O60637"/>
<dbReference type="Proteomes" id="UP000005640">
    <property type="component" value="Chromosome 15"/>
</dbReference>
<dbReference type="RNAct" id="O60637">
    <property type="molecule type" value="protein"/>
</dbReference>
<dbReference type="Bgee" id="ENSG00000140391">
    <property type="expression patterns" value="Expressed in bronchial epithelial cell and 202 other cell types or tissues"/>
</dbReference>
<dbReference type="ExpressionAtlas" id="O60637">
    <property type="expression patterns" value="baseline and differential"/>
</dbReference>
<dbReference type="GO" id="GO:0070062">
    <property type="term" value="C:extracellular exosome"/>
    <property type="evidence" value="ECO:0007005"/>
    <property type="project" value="UniProtKB"/>
</dbReference>
<dbReference type="GO" id="GO:0005886">
    <property type="term" value="C:plasma membrane"/>
    <property type="evidence" value="ECO:0000318"/>
    <property type="project" value="GO_Central"/>
</dbReference>
<dbReference type="CDD" id="cd03163">
    <property type="entry name" value="TM4SF8_like_LEL"/>
    <property type="match status" value="1"/>
</dbReference>
<dbReference type="FunFam" id="1.10.1450.10:FF:000004">
    <property type="entry name" value="Tetraspanin"/>
    <property type="match status" value="1"/>
</dbReference>
<dbReference type="Gene3D" id="1.10.1450.10">
    <property type="entry name" value="Tetraspanin"/>
    <property type="match status" value="1"/>
</dbReference>
<dbReference type="InterPro" id="IPR018499">
    <property type="entry name" value="Tetraspanin/Peripherin"/>
</dbReference>
<dbReference type="InterPro" id="IPR000301">
    <property type="entry name" value="Tetraspanin_animals"/>
</dbReference>
<dbReference type="InterPro" id="IPR018503">
    <property type="entry name" value="Tetraspanin_CS"/>
</dbReference>
<dbReference type="InterPro" id="IPR008952">
    <property type="entry name" value="Tetraspanin_EC2_sf"/>
</dbReference>
<dbReference type="PANTHER" id="PTHR19282">
    <property type="entry name" value="TETRASPANIN"/>
    <property type="match status" value="1"/>
</dbReference>
<dbReference type="PANTHER" id="PTHR19282:SF48">
    <property type="entry name" value="TETRASPANIN-3"/>
    <property type="match status" value="1"/>
</dbReference>
<dbReference type="Pfam" id="PF00335">
    <property type="entry name" value="Tetraspanin"/>
    <property type="match status" value="1"/>
</dbReference>
<dbReference type="PIRSF" id="PIRSF002419">
    <property type="entry name" value="Tetraspanin"/>
    <property type="match status" value="1"/>
</dbReference>
<dbReference type="PRINTS" id="PR00259">
    <property type="entry name" value="TMFOUR"/>
</dbReference>
<dbReference type="SUPFAM" id="SSF48652">
    <property type="entry name" value="Tetraspanin"/>
    <property type="match status" value="1"/>
</dbReference>
<dbReference type="PROSITE" id="PS00421">
    <property type="entry name" value="TM4_1"/>
    <property type="match status" value="1"/>
</dbReference>
<proteinExistence type="evidence at protein level"/>
<keyword id="KW-0025">Alternative splicing</keyword>
<keyword id="KW-0325">Glycoprotein</keyword>
<keyword id="KW-0472">Membrane</keyword>
<keyword id="KW-1267">Proteomics identification</keyword>
<keyword id="KW-1185">Reference proteome</keyword>
<keyword id="KW-0812">Transmembrane</keyword>
<keyword id="KW-1133">Transmembrane helix</keyword>
<sequence length="253" mass="28018">MGQCGITSSKTVLVFLNLIFWGAAGILCYVGAYVFITYDDYDHFFEDVYTLIPAVVIIAVGALLFIIGLIGCCATIRESRCGLATFVIILLLVFVTEVVVVVLGYVYRAKVENEVDRSIQKVYKTYNGTNPDAASRAIDYVQRQLHCCGIHNYSDWENTDWFKETKNQSVPLSCCRETASNCNGSLAHPSDLYAEGCEALVVKKLQEIMMHVIWAALAFAAIQLLGMLCACIVLCRRSRDPAYELLITGGTYA</sequence>
<feature type="chain" id="PRO_0000219239" description="Tetraspanin-3">
    <location>
        <begin position="1"/>
        <end position="253"/>
    </location>
</feature>
<feature type="topological domain" description="Cytoplasmic" evidence="2">
    <location>
        <begin position="1"/>
        <end position="11"/>
    </location>
</feature>
<feature type="transmembrane region" description="Helical" evidence="2">
    <location>
        <begin position="12"/>
        <end position="32"/>
    </location>
</feature>
<feature type="topological domain" description="Extracellular" evidence="2">
    <location>
        <begin position="33"/>
        <end position="50"/>
    </location>
</feature>
<feature type="transmembrane region" description="Helical" evidence="2">
    <location>
        <begin position="51"/>
        <end position="71"/>
    </location>
</feature>
<feature type="topological domain" description="Cytoplasmic" evidence="2">
    <location>
        <begin position="72"/>
        <end position="85"/>
    </location>
</feature>
<feature type="transmembrane region" description="Helical" evidence="2">
    <location>
        <begin position="86"/>
        <end position="106"/>
    </location>
</feature>
<feature type="topological domain" description="Extracellular" evidence="2">
    <location>
        <begin position="107"/>
        <end position="212"/>
    </location>
</feature>
<feature type="transmembrane region" description="Helical" evidence="2">
    <location>
        <begin position="213"/>
        <end position="233"/>
    </location>
</feature>
<feature type="topological domain" description="Cytoplasmic" evidence="2">
    <location>
        <begin position="234"/>
        <end position="253"/>
    </location>
</feature>
<feature type="glycosylation site" description="N-linked (GlcNAc...) asparagine" evidence="2">
    <location>
        <position position="127"/>
    </location>
</feature>
<feature type="glycosylation site" description="N-linked (GlcNAc...) asparagine" evidence="2">
    <location>
        <position position="152"/>
    </location>
</feature>
<feature type="glycosylation site" description="N-linked (GlcNAc...) asparagine" evidence="2">
    <location>
        <position position="167"/>
    </location>
</feature>
<feature type="glycosylation site" description="N-linked (GlcNAc...) asparagine" evidence="2">
    <location>
        <position position="183"/>
    </location>
</feature>
<feature type="splice variant" id="VSP_043519" description="In isoform 3." evidence="3">
    <location>
        <begin position="22"/>
        <end position="85"/>
    </location>
</feature>
<feature type="splice variant" id="VSP_042679" description="In isoform 2." evidence="4">
    <location>
        <begin position="86"/>
        <end position="110"/>
    </location>
</feature>
<feature type="sequence conflict" description="In Ref. 7; AAH00704." evidence="5" ref="7">
    <location>
        <position position="85"/>
    </location>
</feature>
<feature type="sequence conflict" description="In Ref. 3; BAA91613." evidence="5" ref="3">
    <original>R</original>
    <variation>G</variation>
    <location>
        <position position="236"/>
    </location>
</feature>
<reference key="1">
    <citation type="journal article" date="1998" name="Biochim. Biophys. Acta">
        <title>Sequences and expression of six new members of the tetraspanin/TM4SF family.</title>
        <authorList>
            <person name="Todd S.C."/>
            <person name="Doctor V.S."/>
            <person name="Levy S."/>
        </authorList>
    </citation>
    <scope>NUCLEOTIDE SEQUENCE [MRNA] (ISOFORM 1)</scope>
</reference>
<reference key="2">
    <citation type="submission" date="1999-03" db="EMBL/GenBank/DDBJ databases">
        <title>The molecular characterization of four tetraspanins.</title>
        <authorList>
            <person name="Puls K.L."/>
            <person name="Ni J."/>
            <person name="Liu D."/>
            <person name="Morahan G."/>
            <person name="Wright M.D."/>
        </authorList>
    </citation>
    <scope>NUCLEOTIDE SEQUENCE [MRNA] (ISOFORM 1)</scope>
</reference>
<reference key="3">
    <citation type="journal article" date="2004" name="Nat. Genet.">
        <title>Complete sequencing and characterization of 21,243 full-length human cDNAs.</title>
        <authorList>
            <person name="Ota T."/>
            <person name="Suzuki Y."/>
            <person name="Nishikawa T."/>
            <person name="Otsuki T."/>
            <person name="Sugiyama T."/>
            <person name="Irie R."/>
            <person name="Wakamatsu A."/>
            <person name="Hayashi K."/>
            <person name="Sato H."/>
            <person name="Nagai K."/>
            <person name="Kimura K."/>
            <person name="Makita H."/>
            <person name="Sekine M."/>
            <person name="Obayashi M."/>
            <person name="Nishi T."/>
            <person name="Shibahara T."/>
            <person name="Tanaka T."/>
            <person name="Ishii S."/>
            <person name="Yamamoto J."/>
            <person name="Saito K."/>
            <person name="Kawai Y."/>
            <person name="Isono Y."/>
            <person name="Nakamura Y."/>
            <person name="Nagahari K."/>
            <person name="Murakami K."/>
            <person name="Yasuda T."/>
            <person name="Iwayanagi T."/>
            <person name="Wagatsuma M."/>
            <person name="Shiratori A."/>
            <person name="Sudo H."/>
            <person name="Hosoiri T."/>
            <person name="Kaku Y."/>
            <person name="Kodaira H."/>
            <person name="Kondo H."/>
            <person name="Sugawara M."/>
            <person name="Takahashi M."/>
            <person name="Kanda K."/>
            <person name="Yokoi T."/>
            <person name="Furuya T."/>
            <person name="Kikkawa E."/>
            <person name="Omura Y."/>
            <person name="Abe K."/>
            <person name="Kamihara K."/>
            <person name="Katsuta N."/>
            <person name="Sato K."/>
            <person name="Tanikawa M."/>
            <person name="Yamazaki M."/>
            <person name="Ninomiya K."/>
            <person name="Ishibashi T."/>
            <person name="Yamashita H."/>
            <person name="Murakawa K."/>
            <person name="Fujimori K."/>
            <person name="Tanai H."/>
            <person name="Kimata M."/>
            <person name="Watanabe M."/>
            <person name="Hiraoka S."/>
            <person name="Chiba Y."/>
            <person name="Ishida S."/>
            <person name="Ono Y."/>
            <person name="Takiguchi S."/>
            <person name="Watanabe S."/>
            <person name="Yosida M."/>
            <person name="Hotuta T."/>
            <person name="Kusano J."/>
            <person name="Kanehori K."/>
            <person name="Takahashi-Fujii A."/>
            <person name="Hara H."/>
            <person name="Tanase T.-O."/>
            <person name="Nomura Y."/>
            <person name="Togiya S."/>
            <person name="Komai F."/>
            <person name="Hara R."/>
            <person name="Takeuchi K."/>
            <person name="Arita M."/>
            <person name="Imose N."/>
            <person name="Musashino K."/>
            <person name="Yuuki H."/>
            <person name="Oshima A."/>
            <person name="Sasaki N."/>
            <person name="Aotsuka S."/>
            <person name="Yoshikawa Y."/>
            <person name="Matsunawa H."/>
            <person name="Ichihara T."/>
            <person name="Shiohata N."/>
            <person name="Sano S."/>
            <person name="Moriya S."/>
            <person name="Momiyama H."/>
            <person name="Satoh N."/>
            <person name="Takami S."/>
            <person name="Terashima Y."/>
            <person name="Suzuki O."/>
            <person name="Nakagawa S."/>
            <person name="Senoh A."/>
            <person name="Mizoguchi H."/>
            <person name="Goto Y."/>
            <person name="Shimizu F."/>
            <person name="Wakebe H."/>
            <person name="Hishigaki H."/>
            <person name="Watanabe T."/>
            <person name="Sugiyama A."/>
            <person name="Takemoto M."/>
            <person name="Kawakami B."/>
            <person name="Yamazaki M."/>
            <person name="Watanabe K."/>
            <person name="Kumagai A."/>
            <person name="Itakura S."/>
            <person name="Fukuzumi Y."/>
            <person name="Fujimori Y."/>
            <person name="Komiyama M."/>
            <person name="Tashiro H."/>
            <person name="Tanigami A."/>
            <person name="Fujiwara T."/>
            <person name="Ono T."/>
            <person name="Yamada K."/>
            <person name="Fujii Y."/>
            <person name="Ozaki K."/>
            <person name="Hirao M."/>
            <person name="Ohmori Y."/>
            <person name="Kawabata A."/>
            <person name="Hikiji T."/>
            <person name="Kobatake N."/>
            <person name="Inagaki H."/>
            <person name="Ikema Y."/>
            <person name="Okamoto S."/>
            <person name="Okitani R."/>
            <person name="Kawakami T."/>
            <person name="Noguchi S."/>
            <person name="Itoh T."/>
            <person name="Shigeta K."/>
            <person name="Senba T."/>
            <person name="Matsumura K."/>
            <person name="Nakajima Y."/>
            <person name="Mizuno T."/>
            <person name="Morinaga M."/>
            <person name="Sasaki M."/>
            <person name="Togashi T."/>
            <person name="Oyama M."/>
            <person name="Hata H."/>
            <person name="Watanabe M."/>
            <person name="Komatsu T."/>
            <person name="Mizushima-Sugano J."/>
            <person name="Satoh T."/>
            <person name="Shirai Y."/>
            <person name="Takahashi Y."/>
            <person name="Nakagawa K."/>
            <person name="Okumura K."/>
            <person name="Nagase T."/>
            <person name="Nomura N."/>
            <person name="Kikuchi H."/>
            <person name="Masuho Y."/>
            <person name="Yamashita R."/>
            <person name="Nakai K."/>
            <person name="Yada T."/>
            <person name="Nakamura Y."/>
            <person name="Ohara O."/>
            <person name="Isogai T."/>
            <person name="Sugano S."/>
        </authorList>
    </citation>
    <scope>NUCLEOTIDE SEQUENCE [LARGE SCALE MRNA] (ISOFORMS 1 AND 3)</scope>
</reference>
<reference key="4">
    <citation type="journal article" date="2005" name="DNA Res.">
        <title>Signal sequence and keyword trap in silico for selection of full-length human cDNAs encoding secretion or membrane proteins from oligo-capped cDNA libraries.</title>
        <authorList>
            <person name="Otsuki T."/>
            <person name="Ota T."/>
            <person name="Nishikawa T."/>
            <person name="Hayashi K."/>
            <person name="Suzuki Y."/>
            <person name="Yamamoto J."/>
            <person name="Wakamatsu A."/>
            <person name="Kimura K."/>
            <person name="Sakamoto K."/>
            <person name="Hatano N."/>
            <person name="Kawai Y."/>
            <person name="Ishii S."/>
            <person name="Saito K."/>
            <person name="Kojima S."/>
            <person name="Sugiyama T."/>
            <person name="Ono T."/>
            <person name="Okano K."/>
            <person name="Yoshikawa Y."/>
            <person name="Aotsuka S."/>
            <person name="Sasaki N."/>
            <person name="Hattori A."/>
            <person name="Okumura K."/>
            <person name="Nagai K."/>
            <person name="Sugano S."/>
            <person name="Isogai T."/>
        </authorList>
    </citation>
    <scope>NUCLEOTIDE SEQUENCE [LARGE SCALE MRNA] (ISOFORMS 1 AND 2)</scope>
    <source>
        <tissue>Ovary</tissue>
    </source>
</reference>
<reference key="5">
    <citation type="journal article" date="2006" name="Nature">
        <title>Analysis of the DNA sequence and duplication history of human chromosome 15.</title>
        <authorList>
            <person name="Zody M.C."/>
            <person name="Garber M."/>
            <person name="Sharpe T."/>
            <person name="Young S.K."/>
            <person name="Rowen L."/>
            <person name="O'Neill K."/>
            <person name="Whittaker C.A."/>
            <person name="Kamal M."/>
            <person name="Chang J.L."/>
            <person name="Cuomo C.A."/>
            <person name="Dewar K."/>
            <person name="FitzGerald M.G."/>
            <person name="Kodira C.D."/>
            <person name="Madan A."/>
            <person name="Qin S."/>
            <person name="Yang X."/>
            <person name="Abbasi N."/>
            <person name="Abouelleil A."/>
            <person name="Arachchi H.M."/>
            <person name="Baradarani L."/>
            <person name="Birditt B."/>
            <person name="Bloom S."/>
            <person name="Bloom T."/>
            <person name="Borowsky M.L."/>
            <person name="Burke J."/>
            <person name="Butler J."/>
            <person name="Cook A."/>
            <person name="DeArellano K."/>
            <person name="DeCaprio D."/>
            <person name="Dorris L. III"/>
            <person name="Dors M."/>
            <person name="Eichler E.E."/>
            <person name="Engels R."/>
            <person name="Fahey J."/>
            <person name="Fleetwood P."/>
            <person name="Friedman C."/>
            <person name="Gearin G."/>
            <person name="Hall J.L."/>
            <person name="Hensley G."/>
            <person name="Johnson E."/>
            <person name="Jones C."/>
            <person name="Kamat A."/>
            <person name="Kaur A."/>
            <person name="Locke D.P."/>
            <person name="Madan A."/>
            <person name="Munson G."/>
            <person name="Jaffe D.B."/>
            <person name="Lui A."/>
            <person name="Macdonald P."/>
            <person name="Mauceli E."/>
            <person name="Naylor J.W."/>
            <person name="Nesbitt R."/>
            <person name="Nicol R."/>
            <person name="O'Leary S.B."/>
            <person name="Ratcliffe A."/>
            <person name="Rounsley S."/>
            <person name="She X."/>
            <person name="Sneddon K.M.B."/>
            <person name="Stewart S."/>
            <person name="Sougnez C."/>
            <person name="Stone S.M."/>
            <person name="Topham K."/>
            <person name="Vincent D."/>
            <person name="Wang S."/>
            <person name="Zimmer A.R."/>
            <person name="Birren B.W."/>
            <person name="Hood L."/>
            <person name="Lander E.S."/>
            <person name="Nusbaum C."/>
        </authorList>
    </citation>
    <scope>NUCLEOTIDE SEQUENCE [LARGE SCALE GENOMIC DNA]</scope>
</reference>
<reference key="6">
    <citation type="submission" date="2005-09" db="EMBL/GenBank/DDBJ databases">
        <authorList>
            <person name="Mural R.J."/>
            <person name="Istrail S."/>
            <person name="Sutton G.G."/>
            <person name="Florea L."/>
            <person name="Halpern A.L."/>
            <person name="Mobarry C.M."/>
            <person name="Lippert R."/>
            <person name="Walenz B."/>
            <person name="Shatkay H."/>
            <person name="Dew I."/>
            <person name="Miller J.R."/>
            <person name="Flanigan M.J."/>
            <person name="Edwards N.J."/>
            <person name="Bolanos R."/>
            <person name="Fasulo D."/>
            <person name="Halldorsson B.V."/>
            <person name="Hannenhalli S."/>
            <person name="Turner R."/>
            <person name="Yooseph S."/>
            <person name="Lu F."/>
            <person name="Nusskern D.R."/>
            <person name="Shue B.C."/>
            <person name="Zheng X.H."/>
            <person name="Zhong F."/>
            <person name="Delcher A.L."/>
            <person name="Huson D.H."/>
            <person name="Kravitz S.A."/>
            <person name="Mouchard L."/>
            <person name="Reinert K."/>
            <person name="Remington K.A."/>
            <person name="Clark A.G."/>
            <person name="Waterman M.S."/>
            <person name="Eichler E.E."/>
            <person name="Adams M.D."/>
            <person name="Hunkapiller M.W."/>
            <person name="Myers E.W."/>
            <person name="Venter J.C."/>
        </authorList>
    </citation>
    <scope>NUCLEOTIDE SEQUENCE [LARGE SCALE GENOMIC DNA]</scope>
</reference>
<reference key="7">
    <citation type="journal article" date="2004" name="Genome Res.">
        <title>The status, quality, and expansion of the NIH full-length cDNA project: the Mammalian Gene Collection (MGC).</title>
        <authorList>
            <consortium name="The MGC Project Team"/>
        </authorList>
    </citation>
    <scope>NUCLEOTIDE SEQUENCE [LARGE SCALE MRNA] (ISOFORM 1)</scope>
    <source>
        <tissue>Cervix</tissue>
        <tissue>Colon</tissue>
        <tissue>Muscle</tissue>
        <tissue>Skin</tissue>
    </source>
</reference>
<gene>
    <name type="primary">TSPAN3</name>
    <name type="synonym">TM4SF8</name>
</gene>